<name>HA21_MOUSE</name>
<comment type="subcellular location">
    <subcellularLocation>
        <location evidence="3">Membrane</location>
        <topology evidence="3">Single-pass type I membrane protein</topology>
    </subcellularLocation>
</comment>
<comment type="similarity">
    <text evidence="3">Belongs to the MHC class II family.</text>
</comment>
<dbReference type="EMBL" id="K00971">
    <property type="protein sequence ID" value="AAA98624.1"/>
    <property type="molecule type" value="Genomic_DNA"/>
</dbReference>
<dbReference type="EMBL" id="J00396">
    <property type="protein sequence ID" value="AAA39582.1"/>
    <property type="molecule type" value="Genomic_DNA"/>
</dbReference>
<dbReference type="PIR" id="B91743">
    <property type="entry name" value="HLMSED"/>
</dbReference>
<dbReference type="PDB" id="1IEA">
    <property type="method" value="X-ray"/>
    <property type="resolution" value="2.30 A"/>
    <property type="chains" value="A/C=26-217"/>
</dbReference>
<dbReference type="PDB" id="1IEB">
    <property type="method" value="X-ray"/>
    <property type="resolution" value="2.70 A"/>
    <property type="chains" value="A/C=26-217"/>
</dbReference>
<dbReference type="PDB" id="1KT2">
    <property type="method" value="X-ray"/>
    <property type="resolution" value="2.80 A"/>
    <property type="chains" value="A/C=26-207"/>
</dbReference>
<dbReference type="PDB" id="1KTD">
    <property type="method" value="X-ray"/>
    <property type="resolution" value="2.40 A"/>
    <property type="chains" value="A/C=26-207"/>
</dbReference>
<dbReference type="PDBsum" id="1IEA"/>
<dbReference type="PDBsum" id="1IEB"/>
<dbReference type="PDBsum" id="1KT2"/>
<dbReference type="PDBsum" id="1KTD"/>
<dbReference type="SMR" id="P01904"/>
<dbReference type="FunCoup" id="P01904">
    <property type="interactions" value="278"/>
</dbReference>
<dbReference type="GlyCosmos" id="P01904">
    <property type="glycosylation" value="1 site, No reported glycans"/>
</dbReference>
<dbReference type="GlyGen" id="P01904">
    <property type="glycosylation" value="2 sites"/>
</dbReference>
<dbReference type="jPOST" id="P01904"/>
<dbReference type="AGR" id="MGI:95900"/>
<dbReference type="MGI" id="MGI:95900">
    <property type="gene designation" value="H2-Ea"/>
</dbReference>
<dbReference type="InParanoid" id="P01904"/>
<dbReference type="Reactome" id="R-MMU-202424">
    <property type="pathway name" value="Downstream TCR signaling"/>
</dbReference>
<dbReference type="Reactome" id="R-MMU-202427">
    <property type="pathway name" value="Phosphorylation of CD3 and TCR zeta chains"/>
</dbReference>
<dbReference type="Reactome" id="R-MMU-202430">
    <property type="pathway name" value="Translocation of ZAP-70 to Immunological synapse"/>
</dbReference>
<dbReference type="Reactome" id="R-MMU-202433">
    <property type="pathway name" value="Generation of second messenger molecules"/>
</dbReference>
<dbReference type="Reactome" id="R-MMU-2132295">
    <property type="pathway name" value="MHC class II antigen presentation"/>
</dbReference>
<dbReference type="Reactome" id="R-MMU-389948">
    <property type="pathway name" value="Co-inhibition by PD-1"/>
</dbReference>
<dbReference type="ChiTaRS" id="H2-Ea-ps">
    <property type="organism name" value="mouse"/>
</dbReference>
<dbReference type="EvolutionaryTrace" id="P01904"/>
<dbReference type="Proteomes" id="UP000000589">
    <property type="component" value="Unplaced"/>
</dbReference>
<dbReference type="RNAct" id="P01904">
    <property type="molecule type" value="protein"/>
</dbReference>
<dbReference type="GO" id="GO:0009897">
    <property type="term" value="C:external side of plasma membrane"/>
    <property type="evidence" value="ECO:0000314"/>
    <property type="project" value="MGI"/>
</dbReference>
<dbReference type="GO" id="GO:0005764">
    <property type="term" value="C:lysosome"/>
    <property type="evidence" value="ECO:0000266"/>
    <property type="project" value="MGI"/>
</dbReference>
<dbReference type="GO" id="GO:0042613">
    <property type="term" value="C:MHC class II protein complex"/>
    <property type="evidence" value="ECO:0007669"/>
    <property type="project" value="UniProtKB-KW"/>
</dbReference>
<dbReference type="GO" id="GO:0005886">
    <property type="term" value="C:plasma membrane"/>
    <property type="evidence" value="ECO:0000266"/>
    <property type="project" value="MGI"/>
</dbReference>
<dbReference type="GO" id="GO:0019886">
    <property type="term" value="P:antigen processing and presentation of exogenous peptide antigen via MHC class II"/>
    <property type="evidence" value="ECO:0000314"/>
    <property type="project" value="MGI"/>
</dbReference>
<dbReference type="GO" id="GO:0016064">
    <property type="term" value="P:immunoglobulin mediated immune response"/>
    <property type="evidence" value="ECO:0000314"/>
    <property type="project" value="MGI"/>
</dbReference>
<dbReference type="GO" id="GO:0050778">
    <property type="term" value="P:positive regulation of immune response"/>
    <property type="evidence" value="ECO:0000314"/>
    <property type="project" value="MGI"/>
</dbReference>
<dbReference type="CDD" id="cd21005">
    <property type="entry name" value="IgC1_MHC_II_alpha_I-EK"/>
    <property type="match status" value="1"/>
</dbReference>
<dbReference type="FunFam" id="2.60.40.10:FF:000280">
    <property type="entry name" value="HLA class II histocompatibility antigen, DR alpha chain"/>
    <property type="match status" value="1"/>
</dbReference>
<dbReference type="FunFam" id="3.10.320.10:FF:000002">
    <property type="entry name" value="HLA class II histocompatibility antigen, DR alpha chain"/>
    <property type="match status" value="1"/>
</dbReference>
<dbReference type="Gene3D" id="3.10.320.10">
    <property type="entry name" value="Class II Histocompatibility Antigen, M Beta Chain, Chain B, domain 1"/>
    <property type="match status" value="1"/>
</dbReference>
<dbReference type="Gene3D" id="2.60.40.10">
    <property type="entry name" value="Immunoglobulins"/>
    <property type="match status" value="1"/>
</dbReference>
<dbReference type="InterPro" id="IPR007110">
    <property type="entry name" value="Ig-like_dom"/>
</dbReference>
<dbReference type="InterPro" id="IPR036179">
    <property type="entry name" value="Ig-like_dom_sf"/>
</dbReference>
<dbReference type="InterPro" id="IPR013783">
    <property type="entry name" value="Ig-like_fold"/>
</dbReference>
<dbReference type="InterPro" id="IPR003006">
    <property type="entry name" value="Ig/MHC_CS"/>
</dbReference>
<dbReference type="InterPro" id="IPR003597">
    <property type="entry name" value="Ig_C1-set"/>
</dbReference>
<dbReference type="InterPro" id="IPR050160">
    <property type="entry name" value="MHC/Immunoglobulin"/>
</dbReference>
<dbReference type="InterPro" id="IPR011162">
    <property type="entry name" value="MHC_I/II-like_Ag-recog"/>
</dbReference>
<dbReference type="InterPro" id="IPR014745">
    <property type="entry name" value="MHC_II_a/b_N"/>
</dbReference>
<dbReference type="InterPro" id="IPR001003">
    <property type="entry name" value="MHC_II_a_N"/>
</dbReference>
<dbReference type="PANTHER" id="PTHR19944:SF86">
    <property type="entry name" value="HLA CLASS II HISTOCOMPATIBILITY ANTIGEN, DR ALPHA CHAIN"/>
    <property type="match status" value="1"/>
</dbReference>
<dbReference type="PANTHER" id="PTHR19944">
    <property type="entry name" value="MHC CLASS II-RELATED"/>
    <property type="match status" value="1"/>
</dbReference>
<dbReference type="Pfam" id="PF07654">
    <property type="entry name" value="C1-set"/>
    <property type="match status" value="1"/>
</dbReference>
<dbReference type="Pfam" id="PF00993">
    <property type="entry name" value="MHC_II_alpha"/>
    <property type="match status" value="1"/>
</dbReference>
<dbReference type="SMART" id="SM00407">
    <property type="entry name" value="IGc1"/>
    <property type="match status" value="1"/>
</dbReference>
<dbReference type="SMART" id="SM00920">
    <property type="entry name" value="MHC_II_alpha"/>
    <property type="match status" value="1"/>
</dbReference>
<dbReference type="SUPFAM" id="SSF48726">
    <property type="entry name" value="Immunoglobulin"/>
    <property type="match status" value="1"/>
</dbReference>
<dbReference type="SUPFAM" id="SSF54452">
    <property type="entry name" value="MHC antigen-recognition domain"/>
    <property type="match status" value="1"/>
</dbReference>
<dbReference type="PROSITE" id="PS50835">
    <property type="entry name" value="IG_LIKE"/>
    <property type="match status" value="1"/>
</dbReference>
<dbReference type="PROSITE" id="PS00290">
    <property type="entry name" value="IG_MHC"/>
    <property type="match status" value="1"/>
</dbReference>
<evidence type="ECO:0000255" key="1"/>
<evidence type="ECO:0000255" key="2">
    <source>
        <dbReference type="PROSITE-ProRule" id="PRU00114"/>
    </source>
</evidence>
<evidence type="ECO:0000305" key="3"/>
<evidence type="ECO:0007829" key="4">
    <source>
        <dbReference type="PDB" id="1IEA"/>
    </source>
</evidence>
<evidence type="ECO:0007829" key="5">
    <source>
        <dbReference type="PDB" id="1KT2"/>
    </source>
</evidence>
<accession>P01904</accession>
<accession>Q31157</accession>
<proteinExistence type="evidence at protein level"/>
<organism>
    <name type="scientific">Mus musculus</name>
    <name type="common">Mouse</name>
    <dbReference type="NCBI Taxonomy" id="10090"/>
    <lineage>
        <taxon>Eukaryota</taxon>
        <taxon>Metazoa</taxon>
        <taxon>Chordata</taxon>
        <taxon>Craniata</taxon>
        <taxon>Vertebrata</taxon>
        <taxon>Euteleostomi</taxon>
        <taxon>Mammalia</taxon>
        <taxon>Eutheria</taxon>
        <taxon>Euarchontoglires</taxon>
        <taxon>Glires</taxon>
        <taxon>Rodentia</taxon>
        <taxon>Myomorpha</taxon>
        <taxon>Muroidea</taxon>
        <taxon>Muridae</taxon>
        <taxon>Murinae</taxon>
        <taxon>Mus</taxon>
        <taxon>Mus</taxon>
    </lineage>
</organism>
<feature type="signal peptide">
    <location>
        <begin position="1"/>
        <end position="25"/>
    </location>
</feature>
<feature type="chain" id="PRO_0000018978" description="H-2 class II histocompatibility antigen, E-D alpha chain">
    <location>
        <begin position="26"/>
        <end position="255"/>
    </location>
</feature>
<feature type="topological domain" description="Extracellular" evidence="1">
    <location>
        <begin position="26"/>
        <end position="216"/>
    </location>
</feature>
<feature type="transmembrane region" description="Helical" evidence="1">
    <location>
        <begin position="217"/>
        <end position="242"/>
    </location>
</feature>
<feature type="topological domain" description="Cytoplasmic" evidence="1">
    <location>
        <begin position="243"/>
        <end position="255"/>
    </location>
</feature>
<feature type="domain" description="Ig-like C1-type">
    <location>
        <begin position="112"/>
        <end position="204"/>
    </location>
</feature>
<feature type="region of interest" description="Alpha-1">
    <location>
        <begin position="26"/>
        <end position="109"/>
    </location>
</feature>
<feature type="region of interest" description="Alpha-2">
    <location>
        <begin position="110"/>
        <end position="203"/>
    </location>
</feature>
<feature type="region of interest" description="Connecting peptide">
    <location>
        <begin position="204"/>
        <end position="216"/>
    </location>
</feature>
<feature type="glycosylation site" description="N-linked (GlcNAc...) asparagine" evidence="1">
    <location>
        <position position="143"/>
    </location>
</feature>
<feature type="disulfide bond" evidence="2">
    <location>
        <begin position="132"/>
        <end position="188"/>
    </location>
</feature>
<feature type="sequence conflict" description="In Ref. 3; AAA39582." evidence="3" ref="3">
    <original>E</original>
    <variation>T</variation>
    <location>
        <position position="155"/>
    </location>
</feature>
<feature type="sequence conflict" description="In Ref. 3; AAA39582." evidence="3" ref="3">
    <original>T</original>
    <variation>A</variation>
    <location>
        <position position="202"/>
    </location>
</feature>
<feature type="sequence conflict" description="In Ref. 2; no nucleotide entry." evidence="3" ref="2">
    <original>M</original>
    <variation>A</variation>
    <location>
        <position position="239"/>
    </location>
</feature>
<feature type="strand" evidence="4">
    <location>
        <begin position="30"/>
        <end position="40"/>
    </location>
</feature>
<feature type="turn" evidence="4">
    <location>
        <begin position="41"/>
        <end position="43"/>
    </location>
</feature>
<feature type="strand" evidence="4">
    <location>
        <begin position="44"/>
        <end position="51"/>
    </location>
</feature>
<feature type="strand" evidence="4">
    <location>
        <begin position="54"/>
        <end position="60"/>
    </location>
</feature>
<feature type="turn" evidence="4">
    <location>
        <begin position="61"/>
        <end position="64"/>
    </location>
</feature>
<feature type="strand" evidence="4">
    <location>
        <begin position="65"/>
        <end position="70"/>
    </location>
</feature>
<feature type="helix" evidence="4">
    <location>
        <begin position="71"/>
        <end position="75"/>
    </location>
</feature>
<feature type="helix" evidence="4">
    <location>
        <begin position="81"/>
        <end position="101"/>
    </location>
</feature>
<feature type="turn" evidence="4">
    <location>
        <begin position="102"/>
        <end position="104"/>
    </location>
</feature>
<feature type="strand" evidence="4">
    <location>
        <begin position="113"/>
        <end position="120"/>
    </location>
</feature>
<feature type="strand" evidence="4">
    <location>
        <begin position="128"/>
        <end position="140"/>
    </location>
</feature>
<feature type="strand" evidence="4">
    <location>
        <begin position="143"/>
        <end position="148"/>
    </location>
</feature>
<feature type="strand" evidence="5">
    <location>
        <begin position="151"/>
        <end position="153"/>
    </location>
</feature>
<feature type="strand" evidence="4">
    <location>
        <begin position="155"/>
        <end position="159"/>
    </location>
</feature>
<feature type="strand" evidence="4">
    <location>
        <begin position="166"/>
        <end position="168"/>
    </location>
</feature>
<feature type="strand" evidence="4">
    <location>
        <begin position="170"/>
        <end position="178"/>
    </location>
</feature>
<feature type="strand" evidence="4">
    <location>
        <begin position="185"/>
        <end position="191"/>
    </location>
</feature>
<feature type="strand" evidence="4">
    <location>
        <begin position="199"/>
        <end position="204"/>
    </location>
</feature>
<sequence length="255" mass="29117">MATIGALVLRFFFIAVLMSSQKSWAIKEEHTIIQAEFYLLPDKRGEFMFDFDGDEIFHVDIEKSETIWRLEEFAKFASFEAQGALANIAVDKANLDVMKERSNNTPDANVAPEVTVLSRSPVNLGEPNILICFIDKFSPPVVNVTWLRNGRPVTEGVSETVFLPRDDHLFRKFHYLTFLPSTDDFYDCEVDHWGLEEPLRKTWEFEEKTLLPETKENVMCALGLFVGLVGIVVGIILIMKGIKKRNVVERRQGAL</sequence>
<keyword id="KW-0002">3D-structure</keyword>
<keyword id="KW-1064">Adaptive immunity</keyword>
<keyword id="KW-1015">Disulfide bond</keyword>
<keyword id="KW-0325">Glycoprotein</keyword>
<keyword id="KW-0391">Immunity</keyword>
<keyword id="KW-0472">Membrane</keyword>
<keyword id="KW-0491">MHC II</keyword>
<keyword id="KW-1185">Reference proteome</keyword>
<keyword id="KW-0732">Signal</keyword>
<keyword id="KW-0812">Transmembrane</keyword>
<keyword id="KW-1133">Transmembrane helix</keyword>
<gene>
    <name type="primary">H2-Ea</name>
</gene>
<protein>
    <recommendedName>
        <fullName>H-2 class II histocompatibility antigen, E-D alpha chain</fullName>
        <shortName>H2-IE-alpha</shortName>
    </recommendedName>
</protein>
<reference key="1">
    <citation type="journal article" date="1983" name="Nucleic Acids Res.">
        <title>The complete nucleotide sequence of the I-E alpha d immune response gene.</title>
        <authorList>
            <person name="Hyldig-Nielsen J.J."/>
            <person name="Schenning L."/>
            <person name="Hammerling U."/>
            <person name="Widmark E."/>
            <person name="Heldin E."/>
            <person name="Lind P."/>
            <person name="Servenius B."/>
            <person name="Lund T."/>
            <person name="Flavell R."/>
            <person name="Lee J.S."/>
            <person name="Trowsdale J."/>
            <person name="Schreier P.H."/>
            <person name="Zablitzky F."/>
            <person name="Larhammar D."/>
            <person name="Peterson P.A."/>
            <person name="Rask L."/>
        </authorList>
    </citation>
    <scope>NUCLEOTIDE SEQUENCE [GENOMIC DNA]</scope>
    <source>
        <strain>BALB/cJ</strain>
    </source>
</reference>
<reference key="2">
    <citation type="journal article" date="1983" name="Hum. Immunol.">
        <title>Molecular analysis of human class II transplantation antigens and their genes.</title>
        <authorList>
            <person name="Larhammar D."/>
            <person name="Andersson G."/>
            <person name="Andersson M."/>
            <person name="Bill P."/>
            <person name="Boehme J."/>
            <person name="Claesson L."/>
            <person name="Denaro M."/>
            <person name="Emmoth E."/>
            <person name="Gustafsson K."/>
            <person name="Hammarling U."/>
            <person name="Heldin E."/>
            <person name="Hyldig-Nielsen J.-J."/>
            <person name="Lind P."/>
            <person name="Schenning L."/>
            <person name="Servenius B."/>
            <person name="Widmark E."/>
            <person name="Rask L."/>
            <person name="Peterson P.A."/>
        </authorList>
    </citation>
    <scope>NUCLEOTIDE SEQUENCE [GENOMIC DNA]</scope>
</reference>
<reference key="3">
    <citation type="journal article" date="1982" name="Science">
        <title>DNA sequence of the gene encoding the E alpha Ia polypeptide of the BALB/c mouse.</title>
        <authorList>
            <person name="McNicholas J."/>
            <person name="Steinmetz M."/>
            <person name="Hunkapiller T."/>
            <person name="Jones P."/>
            <person name="Hood L.E."/>
        </authorList>
    </citation>
    <scope>NUCLEOTIDE SEQUENCE [GENOMIC DNA] OF 29-255</scope>
    <source>
        <strain>BALB/cJ</strain>
    </source>
</reference>